<organism>
    <name type="scientific">Oleidesulfovibrio alaskensis (strain ATCC BAA-1058 / DSM 17464 / G20)</name>
    <name type="common">Desulfovibrio alaskensis</name>
    <dbReference type="NCBI Taxonomy" id="207559"/>
    <lineage>
        <taxon>Bacteria</taxon>
        <taxon>Pseudomonadati</taxon>
        <taxon>Thermodesulfobacteriota</taxon>
        <taxon>Desulfovibrionia</taxon>
        <taxon>Desulfovibrionales</taxon>
        <taxon>Desulfovibrionaceae</taxon>
        <taxon>Oleidesulfovibrio</taxon>
    </lineage>
</organism>
<sequence>MFGIGIPELLVIFVLILLVFGAKRLPEIGGGLGRAIKNFKKATTEPDEIDVTPSSEKKHKDE</sequence>
<keyword id="KW-0997">Cell inner membrane</keyword>
<keyword id="KW-1003">Cell membrane</keyword>
<keyword id="KW-0472">Membrane</keyword>
<keyword id="KW-0653">Protein transport</keyword>
<keyword id="KW-1185">Reference proteome</keyword>
<keyword id="KW-0811">Translocation</keyword>
<keyword id="KW-0812">Transmembrane</keyword>
<keyword id="KW-1133">Transmembrane helix</keyword>
<keyword id="KW-0813">Transport</keyword>
<name>TATA_OLEA2</name>
<comment type="function">
    <text evidence="1">Part of the twin-arginine translocation (Tat) system that transports large folded proteins containing a characteristic twin-arginine motif in their signal peptide across membranes. TatA could form the protein-conducting channel of the Tat system.</text>
</comment>
<comment type="subunit">
    <text evidence="1">The Tat system comprises two distinct complexes: a TatABC complex, containing multiple copies of TatA, TatB and TatC subunits, and a separate TatA complex, containing only TatA subunits. Substrates initially bind to the TatABC complex, which probably triggers association of the separate TatA complex to form the active translocon.</text>
</comment>
<comment type="subcellular location">
    <subcellularLocation>
        <location evidence="1">Cell inner membrane</location>
        <topology evidence="1">Single-pass membrane protein</topology>
    </subcellularLocation>
</comment>
<comment type="similarity">
    <text evidence="1">Belongs to the TatA/E family.</text>
</comment>
<gene>
    <name evidence="1" type="primary">tatA</name>
    <name type="ordered locus">Dde_2177</name>
</gene>
<evidence type="ECO:0000255" key="1">
    <source>
        <dbReference type="HAMAP-Rule" id="MF_00236"/>
    </source>
</evidence>
<feature type="chain" id="PRO_1000044384" description="Sec-independent protein translocase protein TatA">
    <location>
        <begin position="1"/>
        <end position="62"/>
    </location>
</feature>
<feature type="transmembrane region" description="Helical" evidence="1">
    <location>
        <begin position="1"/>
        <end position="21"/>
    </location>
</feature>
<reference key="1">
    <citation type="journal article" date="2011" name="J. Bacteriol.">
        <title>Complete genome sequence and updated annotation of Desulfovibrio alaskensis G20.</title>
        <authorList>
            <person name="Hauser L.J."/>
            <person name="Land M.L."/>
            <person name="Brown S.D."/>
            <person name="Larimer F."/>
            <person name="Keller K.L."/>
            <person name="Rapp-Giles B.J."/>
            <person name="Price M.N."/>
            <person name="Lin M."/>
            <person name="Bruce D.C."/>
            <person name="Detter J.C."/>
            <person name="Tapia R."/>
            <person name="Han C.S."/>
            <person name="Goodwin L.A."/>
            <person name="Cheng J.F."/>
            <person name="Pitluck S."/>
            <person name="Copeland A."/>
            <person name="Lucas S."/>
            <person name="Nolan M."/>
            <person name="Lapidus A.L."/>
            <person name="Palumbo A.V."/>
            <person name="Wall J.D."/>
        </authorList>
    </citation>
    <scope>NUCLEOTIDE SEQUENCE [LARGE SCALE GENOMIC DNA]</scope>
    <source>
        <strain>ATCC BAA-1058 / DSM 17464 / G20</strain>
    </source>
</reference>
<proteinExistence type="inferred from homology"/>
<dbReference type="EMBL" id="CP000112">
    <property type="protein sequence ID" value="ABB38974.1"/>
    <property type="molecule type" value="Genomic_DNA"/>
</dbReference>
<dbReference type="RefSeq" id="WP_011368071.1">
    <property type="nucleotide sequence ID" value="NC_007519.1"/>
</dbReference>
<dbReference type="SMR" id="Q30ZC2"/>
<dbReference type="STRING" id="207559.Dde_2177"/>
<dbReference type="KEGG" id="dde:Dde_2177"/>
<dbReference type="eggNOG" id="COG1826">
    <property type="taxonomic scope" value="Bacteria"/>
</dbReference>
<dbReference type="HOGENOM" id="CLU_086034_6_0_7"/>
<dbReference type="Proteomes" id="UP000002710">
    <property type="component" value="Chromosome"/>
</dbReference>
<dbReference type="GO" id="GO:0033281">
    <property type="term" value="C:TAT protein transport complex"/>
    <property type="evidence" value="ECO:0007669"/>
    <property type="project" value="UniProtKB-UniRule"/>
</dbReference>
<dbReference type="GO" id="GO:0008320">
    <property type="term" value="F:protein transmembrane transporter activity"/>
    <property type="evidence" value="ECO:0007669"/>
    <property type="project" value="UniProtKB-UniRule"/>
</dbReference>
<dbReference type="GO" id="GO:0043953">
    <property type="term" value="P:protein transport by the Tat complex"/>
    <property type="evidence" value="ECO:0007669"/>
    <property type="project" value="UniProtKB-UniRule"/>
</dbReference>
<dbReference type="Gene3D" id="1.20.5.3310">
    <property type="match status" value="1"/>
</dbReference>
<dbReference type="HAMAP" id="MF_00236">
    <property type="entry name" value="TatA_E"/>
    <property type="match status" value="1"/>
</dbReference>
<dbReference type="InterPro" id="IPR003369">
    <property type="entry name" value="TatA/B/E"/>
</dbReference>
<dbReference type="InterPro" id="IPR006312">
    <property type="entry name" value="TatA/E"/>
</dbReference>
<dbReference type="NCBIfam" id="TIGR01411">
    <property type="entry name" value="tatAE"/>
    <property type="match status" value="1"/>
</dbReference>
<dbReference type="PANTHER" id="PTHR42982">
    <property type="entry name" value="SEC-INDEPENDENT PROTEIN TRANSLOCASE PROTEIN TATA"/>
    <property type="match status" value="1"/>
</dbReference>
<dbReference type="PANTHER" id="PTHR42982:SF1">
    <property type="entry name" value="SEC-INDEPENDENT PROTEIN TRANSLOCASE PROTEIN TATA"/>
    <property type="match status" value="1"/>
</dbReference>
<dbReference type="Pfam" id="PF02416">
    <property type="entry name" value="TatA_B_E"/>
    <property type="match status" value="1"/>
</dbReference>
<dbReference type="PRINTS" id="PR01506">
    <property type="entry name" value="TATBPROTEIN"/>
</dbReference>
<accession>Q30ZC2</accession>
<protein>
    <recommendedName>
        <fullName evidence="1">Sec-independent protein translocase protein TatA</fullName>
    </recommendedName>
</protein>